<proteinExistence type="inferred from homology"/>
<protein>
    <recommendedName>
        <fullName evidence="1">UDP-N-acetylglucosamine--N-acetylmuramyl-(pentapeptide) pyrophosphoryl-undecaprenol N-acetylglucosamine transferase</fullName>
        <ecNumber evidence="1">2.4.1.227</ecNumber>
    </recommendedName>
    <alternativeName>
        <fullName evidence="1">Undecaprenyl-PP-MurNAc-pentapeptide-UDPGlcNAc GlcNAc transferase</fullName>
    </alternativeName>
</protein>
<sequence length="378" mass="41184">MNDKKVIVLAAGGTGGHLFPAEALAVELRQRGYDVHLITDERARSFVRRFDEEHTHIVSSATFTRCHPFALIKTILSLLKGMGQSLRLFYKLRPVLVGGFGGYPSFPPLFIAVLMRRVTFIHEQNAVMGRANRVLAIFVRAIAGGLLSPKGAYAHKTLLTGNPVREAVLKAAEIPYHSPVGEEPFNFLVFGGSQGASFFSHIVPEAVALLDDQNRKRLRIVQQVRGDAAGLIKIYRDMGVQAEVAPFFDDMAERMAHAHFILSRAGASSVCEIAVIGRPALLIPYPYALDYDQAENAALLARVGGAQIISEKDLSAQKLAALLTQACCAPHLLEKQALAAKKVGQPYATRCLADMAEALIAGRLLSDIKEELFDENAT</sequence>
<gene>
    <name evidence="1" type="primary">murG</name>
    <name type="ordered locus">BT_1591</name>
</gene>
<evidence type="ECO:0000255" key="1">
    <source>
        <dbReference type="HAMAP-Rule" id="MF_00033"/>
    </source>
</evidence>
<reference key="1">
    <citation type="journal article" date="2007" name="Nat. Genet.">
        <title>Genomic analysis of Bartonella identifies type IV secretion systems as host adaptability factors.</title>
        <authorList>
            <person name="Saenz H.L."/>
            <person name="Engel P."/>
            <person name="Stoeckli M.C."/>
            <person name="Lanz C."/>
            <person name="Raddatz G."/>
            <person name="Vayssier-Taussat M."/>
            <person name="Birtles R."/>
            <person name="Schuster S.C."/>
            <person name="Dehio C."/>
        </authorList>
    </citation>
    <scope>NUCLEOTIDE SEQUENCE [LARGE SCALE GENOMIC DNA]</scope>
    <source>
        <strain>CIP 105476 / IBS 506</strain>
    </source>
</reference>
<accession>A9IWA5</accession>
<name>MURG_BART1</name>
<keyword id="KW-0131">Cell cycle</keyword>
<keyword id="KW-0132">Cell division</keyword>
<keyword id="KW-0997">Cell inner membrane</keyword>
<keyword id="KW-1003">Cell membrane</keyword>
<keyword id="KW-0133">Cell shape</keyword>
<keyword id="KW-0961">Cell wall biogenesis/degradation</keyword>
<keyword id="KW-0328">Glycosyltransferase</keyword>
<keyword id="KW-0472">Membrane</keyword>
<keyword id="KW-0573">Peptidoglycan synthesis</keyword>
<keyword id="KW-0808">Transferase</keyword>
<feature type="chain" id="PRO_1000074447" description="UDP-N-acetylglucosamine--N-acetylmuramyl-(pentapeptide) pyrophosphoryl-undecaprenol N-acetylglucosamine transferase">
    <location>
        <begin position="1"/>
        <end position="378"/>
    </location>
</feature>
<feature type="binding site" evidence="1">
    <location>
        <begin position="14"/>
        <end position="16"/>
    </location>
    <ligand>
        <name>UDP-N-acetyl-alpha-D-glucosamine</name>
        <dbReference type="ChEBI" id="CHEBI:57705"/>
    </ligand>
</feature>
<feature type="binding site" evidence="1">
    <location>
        <position position="125"/>
    </location>
    <ligand>
        <name>UDP-N-acetyl-alpha-D-glucosamine</name>
        <dbReference type="ChEBI" id="CHEBI:57705"/>
    </ligand>
</feature>
<feature type="binding site" evidence="1">
    <location>
        <position position="165"/>
    </location>
    <ligand>
        <name>UDP-N-acetyl-alpha-D-glucosamine</name>
        <dbReference type="ChEBI" id="CHEBI:57705"/>
    </ligand>
</feature>
<feature type="binding site" evidence="1">
    <location>
        <position position="193"/>
    </location>
    <ligand>
        <name>UDP-N-acetyl-alpha-D-glucosamine</name>
        <dbReference type="ChEBI" id="CHEBI:57705"/>
    </ligand>
</feature>
<feature type="binding site" evidence="1">
    <location>
        <position position="293"/>
    </location>
    <ligand>
        <name>UDP-N-acetyl-alpha-D-glucosamine</name>
        <dbReference type="ChEBI" id="CHEBI:57705"/>
    </ligand>
</feature>
<dbReference type="EC" id="2.4.1.227" evidence="1"/>
<dbReference type="EMBL" id="AM260525">
    <property type="protein sequence ID" value="CAK01930.1"/>
    <property type="molecule type" value="Genomic_DNA"/>
</dbReference>
<dbReference type="RefSeq" id="WP_012232056.1">
    <property type="nucleotide sequence ID" value="NC_010161.1"/>
</dbReference>
<dbReference type="SMR" id="A9IWA5"/>
<dbReference type="CAZy" id="GT28">
    <property type="family name" value="Glycosyltransferase Family 28"/>
</dbReference>
<dbReference type="KEGG" id="btr:BT_1591"/>
<dbReference type="eggNOG" id="COG0707">
    <property type="taxonomic scope" value="Bacteria"/>
</dbReference>
<dbReference type="HOGENOM" id="CLU_037404_2_1_5"/>
<dbReference type="UniPathway" id="UPA00219"/>
<dbReference type="Proteomes" id="UP000001592">
    <property type="component" value="Chromosome"/>
</dbReference>
<dbReference type="GO" id="GO:0005886">
    <property type="term" value="C:plasma membrane"/>
    <property type="evidence" value="ECO:0007669"/>
    <property type="project" value="UniProtKB-SubCell"/>
</dbReference>
<dbReference type="GO" id="GO:0051991">
    <property type="term" value="F:UDP-N-acetyl-D-glucosamine:N-acetylmuramoyl-L-alanyl-D-glutamyl-meso-2,6-diaminopimelyl-D-alanyl-D-alanine-diphosphoundecaprenol 4-beta-N-acetylglucosaminlytransferase activity"/>
    <property type="evidence" value="ECO:0007669"/>
    <property type="project" value="RHEA"/>
</dbReference>
<dbReference type="GO" id="GO:0050511">
    <property type="term" value="F:undecaprenyldiphospho-muramoylpentapeptide beta-N-acetylglucosaminyltransferase activity"/>
    <property type="evidence" value="ECO:0007669"/>
    <property type="project" value="UniProtKB-UniRule"/>
</dbReference>
<dbReference type="GO" id="GO:0005975">
    <property type="term" value="P:carbohydrate metabolic process"/>
    <property type="evidence" value="ECO:0007669"/>
    <property type="project" value="InterPro"/>
</dbReference>
<dbReference type="GO" id="GO:0051301">
    <property type="term" value="P:cell division"/>
    <property type="evidence" value="ECO:0007669"/>
    <property type="project" value="UniProtKB-KW"/>
</dbReference>
<dbReference type="GO" id="GO:0071555">
    <property type="term" value="P:cell wall organization"/>
    <property type="evidence" value="ECO:0007669"/>
    <property type="project" value="UniProtKB-KW"/>
</dbReference>
<dbReference type="GO" id="GO:0030259">
    <property type="term" value="P:lipid glycosylation"/>
    <property type="evidence" value="ECO:0007669"/>
    <property type="project" value="UniProtKB-UniRule"/>
</dbReference>
<dbReference type="GO" id="GO:0009252">
    <property type="term" value="P:peptidoglycan biosynthetic process"/>
    <property type="evidence" value="ECO:0007669"/>
    <property type="project" value="UniProtKB-UniRule"/>
</dbReference>
<dbReference type="GO" id="GO:0008360">
    <property type="term" value="P:regulation of cell shape"/>
    <property type="evidence" value="ECO:0007669"/>
    <property type="project" value="UniProtKB-KW"/>
</dbReference>
<dbReference type="CDD" id="cd03785">
    <property type="entry name" value="GT28_MurG"/>
    <property type="match status" value="1"/>
</dbReference>
<dbReference type="Gene3D" id="3.40.50.2000">
    <property type="entry name" value="Glycogen Phosphorylase B"/>
    <property type="match status" value="2"/>
</dbReference>
<dbReference type="HAMAP" id="MF_00033">
    <property type="entry name" value="MurG"/>
    <property type="match status" value="1"/>
</dbReference>
<dbReference type="InterPro" id="IPR006009">
    <property type="entry name" value="GlcNAc_MurG"/>
</dbReference>
<dbReference type="InterPro" id="IPR007235">
    <property type="entry name" value="Glyco_trans_28_C"/>
</dbReference>
<dbReference type="InterPro" id="IPR004276">
    <property type="entry name" value="GlycoTrans_28_N"/>
</dbReference>
<dbReference type="NCBIfam" id="TIGR01133">
    <property type="entry name" value="murG"/>
    <property type="match status" value="1"/>
</dbReference>
<dbReference type="PANTHER" id="PTHR21015:SF22">
    <property type="entry name" value="GLYCOSYLTRANSFERASE"/>
    <property type="match status" value="1"/>
</dbReference>
<dbReference type="PANTHER" id="PTHR21015">
    <property type="entry name" value="UDP-N-ACETYLGLUCOSAMINE--N-ACETYLMURAMYL-(PENTAPEPTIDE) PYROPHOSPHORYL-UNDECAPRENOL N-ACETYLGLUCOSAMINE TRANSFERASE 1"/>
    <property type="match status" value="1"/>
</dbReference>
<dbReference type="Pfam" id="PF04101">
    <property type="entry name" value="Glyco_tran_28_C"/>
    <property type="match status" value="1"/>
</dbReference>
<dbReference type="Pfam" id="PF03033">
    <property type="entry name" value="Glyco_transf_28"/>
    <property type="match status" value="1"/>
</dbReference>
<dbReference type="SUPFAM" id="SSF53756">
    <property type="entry name" value="UDP-Glycosyltransferase/glycogen phosphorylase"/>
    <property type="match status" value="1"/>
</dbReference>
<organism>
    <name type="scientific">Bartonella tribocorum (strain CIP 105476 / IBS 506)</name>
    <dbReference type="NCBI Taxonomy" id="382640"/>
    <lineage>
        <taxon>Bacteria</taxon>
        <taxon>Pseudomonadati</taxon>
        <taxon>Pseudomonadota</taxon>
        <taxon>Alphaproteobacteria</taxon>
        <taxon>Hyphomicrobiales</taxon>
        <taxon>Bartonellaceae</taxon>
        <taxon>Bartonella</taxon>
    </lineage>
</organism>
<comment type="function">
    <text evidence="1">Cell wall formation. Catalyzes the transfer of a GlcNAc subunit on undecaprenyl-pyrophosphoryl-MurNAc-pentapeptide (lipid intermediate I) to form undecaprenyl-pyrophosphoryl-MurNAc-(pentapeptide)GlcNAc (lipid intermediate II).</text>
</comment>
<comment type="catalytic activity">
    <reaction evidence="1">
        <text>di-trans,octa-cis-undecaprenyl diphospho-N-acetyl-alpha-D-muramoyl-L-alanyl-D-glutamyl-meso-2,6-diaminopimeloyl-D-alanyl-D-alanine + UDP-N-acetyl-alpha-D-glucosamine = di-trans,octa-cis-undecaprenyl diphospho-[N-acetyl-alpha-D-glucosaminyl-(1-&gt;4)]-N-acetyl-alpha-D-muramoyl-L-alanyl-D-glutamyl-meso-2,6-diaminopimeloyl-D-alanyl-D-alanine + UDP + H(+)</text>
        <dbReference type="Rhea" id="RHEA:31227"/>
        <dbReference type="ChEBI" id="CHEBI:15378"/>
        <dbReference type="ChEBI" id="CHEBI:57705"/>
        <dbReference type="ChEBI" id="CHEBI:58223"/>
        <dbReference type="ChEBI" id="CHEBI:61387"/>
        <dbReference type="ChEBI" id="CHEBI:61388"/>
        <dbReference type="EC" id="2.4.1.227"/>
    </reaction>
</comment>
<comment type="pathway">
    <text evidence="1">Cell wall biogenesis; peptidoglycan biosynthesis.</text>
</comment>
<comment type="subcellular location">
    <subcellularLocation>
        <location evidence="1">Cell inner membrane</location>
        <topology evidence="1">Peripheral membrane protein</topology>
        <orientation evidence="1">Cytoplasmic side</orientation>
    </subcellularLocation>
</comment>
<comment type="similarity">
    <text evidence="1">Belongs to the glycosyltransferase 28 family. MurG subfamily.</text>
</comment>